<protein>
    <recommendedName>
        <fullName evidence="1">Aspartate carbamoyltransferase catalytic subunit</fullName>
        <ecNumber evidence="1">2.1.3.2</ecNumber>
    </recommendedName>
    <alternativeName>
        <fullName evidence="1">Aspartate transcarbamylase</fullName>
        <shortName evidence="1">ATCase</shortName>
    </alternativeName>
</protein>
<proteinExistence type="inferred from homology"/>
<organism>
    <name type="scientific">Delftia acidovorans (strain DSM 14801 / SPH-1)</name>
    <dbReference type="NCBI Taxonomy" id="398578"/>
    <lineage>
        <taxon>Bacteria</taxon>
        <taxon>Pseudomonadati</taxon>
        <taxon>Pseudomonadota</taxon>
        <taxon>Betaproteobacteria</taxon>
        <taxon>Burkholderiales</taxon>
        <taxon>Comamonadaceae</taxon>
        <taxon>Delftia</taxon>
    </lineage>
</organism>
<dbReference type="EC" id="2.1.3.2" evidence="1"/>
<dbReference type="EMBL" id="CP000884">
    <property type="protein sequence ID" value="ABX34225.1"/>
    <property type="molecule type" value="Genomic_DNA"/>
</dbReference>
<dbReference type="RefSeq" id="WP_012203510.1">
    <property type="nucleotide sequence ID" value="NC_010002.1"/>
</dbReference>
<dbReference type="SMR" id="A9BY86"/>
<dbReference type="STRING" id="398578.Daci_1581"/>
<dbReference type="KEGG" id="dac:Daci_1581"/>
<dbReference type="eggNOG" id="COG0540">
    <property type="taxonomic scope" value="Bacteria"/>
</dbReference>
<dbReference type="HOGENOM" id="CLU_043846_2_0_4"/>
<dbReference type="UniPathway" id="UPA00070">
    <property type="reaction ID" value="UER00116"/>
</dbReference>
<dbReference type="Proteomes" id="UP000000784">
    <property type="component" value="Chromosome"/>
</dbReference>
<dbReference type="GO" id="GO:0005829">
    <property type="term" value="C:cytosol"/>
    <property type="evidence" value="ECO:0007669"/>
    <property type="project" value="TreeGrafter"/>
</dbReference>
<dbReference type="GO" id="GO:0016597">
    <property type="term" value="F:amino acid binding"/>
    <property type="evidence" value="ECO:0007669"/>
    <property type="project" value="InterPro"/>
</dbReference>
<dbReference type="GO" id="GO:0004070">
    <property type="term" value="F:aspartate carbamoyltransferase activity"/>
    <property type="evidence" value="ECO:0007669"/>
    <property type="project" value="UniProtKB-UniRule"/>
</dbReference>
<dbReference type="GO" id="GO:0006207">
    <property type="term" value="P:'de novo' pyrimidine nucleobase biosynthetic process"/>
    <property type="evidence" value="ECO:0007669"/>
    <property type="project" value="InterPro"/>
</dbReference>
<dbReference type="GO" id="GO:0044205">
    <property type="term" value="P:'de novo' UMP biosynthetic process"/>
    <property type="evidence" value="ECO:0007669"/>
    <property type="project" value="UniProtKB-UniRule"/>
</dbReference>
<dbReference type="GO" id="GO:0006520">
    <property type="term" value="P:amino acid metabolic process"/>
    <property type="evidence" value="ECO:0007669"/>
    <property type="project" value="InterPro"/>
</dbReference>
<dbReference type="FunFam" id="3.40.50.1370:FF:000007">
    <property type="entry name" value="Aspartate carbamoyltransferase"/>
    <property type="match status" value="1"/>
</dbReference>
<dbReference type="Gene3D" id="3.40.50.1370">
    <property type="entry name" value="Aspartate/ornithine carbamoyltransferase"/>
    <property type="match status" value="2"/>
</dbReference>
<dbReference type="HAMAP" id="MF_00001">
    <property type="entry name" value="Asp_carb_tr"/>
    <property type="match status" value="1"/>
</dbReference>
<dbReference type="InterPro" id="IPR006132">
    <property type="entry name" value="Asp/Orn_carbamoyltranf_P-bd"/>
</dbReference>
<dbReference type="InterPro" id="IPR006130">
    <property type="entry name" value="Asp/Orn_carbamoylTrfase"/>
</dbReference>
<dbReference type="InterPro" id="IPR036901">
    <property type="entry name" value="Asp/Orn_carbamoylTrfase_sf"/>
</dbReference>
<dbReference type="InterPro" id="IPR002082">
    <property type="entry name" value="Asp_carbamoyltransf"/>
</dbReference>
<dbReference type="InterPro" id="IPR006131">
    <property type="entry name" value="Asp_carbamoyltransf_Asp/Orn-bd"/>
</dbReference>
<dbReference type="NCBIfam" id="TIGR00670">
    <property type="entry name" value="asp_carb_tr"/>
    <property type="match status" value="1"/>
</dbReference>
<dbReference type="NCBIfam" id="NF002032">
    <property type="entry name" value="PRK00856.1"/>
    <property type="match status" value="1"/>
</dbReference>
<dbReference type="PANTHER" id="PTHR45753:SF6">
    <property type="entry name" value="ASPARTATE CARBAMOYLTRANSFERASE"/>
    <property type="match status" value="1"/>
</dbReference>
<dbReference type="PANTHER" id="PTHR45753">
    <property type="entry name" value="ORNITHINE CARBAMOYLTRANSFERASE, MITOCHONDRIAL"/>
    <property type="match status" value="1"/>
</dbReference>
<dbReference type="Pfam" id="PF00185">
    <property type="entry name" value="OTCace"/>
    <property type="match status" value="1"/>
</dbReference>
<dbReference type="Pfam" id="PF02729">
    <property type="entry name" value="OTCace_N"/>
    <property type="match status" value="1"/>
</dbReference>
<dbReference type="PRINTS" id="PR00100">
    <property type="entry name" value="AOTCASE"/>
</dbReference>
<dbReference type="PRINTS" id="PR00101">
    <property type="entry name" value="ATCASE"/>
</dbReference>
<dbReference type="SUPFAM" id="SSF53671">
    <property type="entry name" value="Aspartate/ornithine carbamoyltransferase"/>
    <property type="match status" value="1"/>
</dbReference>
<dbReference type="PROSITE" id="PS00097">
    <property type="entry name" value="CARBAMOYLTRANSFERASE"/>
    <property type="match status" value="1"/>
</dbReference>
<name>PYRB_DELAS</name>
<gene>
    <name evidence="1" type="primary">pyrB</name>
    <name type="ordered locus">Daci_1581</name>
</gene>
<keyword id="KW-0665">Pyrimidine biosynthesis</keyword>
<keyword id="KW-1185">Reference proteome</keyword>
<keyword id="KW-0808">Transferase</keyword>
<feature type="chain" id="PRO_1000088758" description="Aspartate carbamoyltransferase catalytic subunit">
    <location>
        <begin position="1"/>
        <end position="320"/>
    </location>
</feature>
<feature type="binding site" evidence="1">
    <location>
        <position position="68"/>
    </location>
    <ligand>
        <name>carbamoyl phosphate</name>
        <dbReference type="ChEBI" id="CHEBI:58228"/>
    </ligand>
</feature>
<feature type="binding site" evidence="1">
    <location>
        <position position="69"/>
    </location>
    <ligand>
        <name>carbamoyl phosphate</name>
        <dbReference type="ChEBI" id="CHEBI:58228"/>
    </ligand>
</feature>
<feature type="binding site" evidence="1">
    <location>
        <position position="96"/>
    </location>
    <ligand>
        <name>L-aspartate</name>
        <dbReference type="ChEBI" id="CHEBI:29991"/>
    </ligand>
</feature>
<feature type="binding site" evidence="1">
    <location>
        <position position="118"/>
    </location>
    <ligand>
        <name>carbamoyl phosphate</name>
        <dbReference type="ChEBI" id="CHEBI:58228"/>
    </ligand>
</feature>
<feature type="binding site" evidence="1">
    <location>
        <position position="148"/>
    </location>
    <ligand>
        <name>carbamoyl phosphate</name>
        <dbReference type="ChEBI" id="CHEBI:58228"/>
    </ligand>
</feature>
<feature type="binding site" evidence="1">
    <location>
        <position position="151"/>
    </location>
    <ligand>
        <name>carbamoyl phosphate</name>
        <dbReference type="ChEBI" id="CHEBI:58228"/>
    </ligand>
</feature>
<feature type="binding site" evidence="1">
    <location>
        <position position="181"/>
    </location>
    <ligand>
        <name>L-aspartate</name>
        <dbReference type="ChEBI" id="CHEBI:29991"/>
    </ligand>
</feature>
<feature type="binding site" evidence="1">
    <location>
        <position position="236"/>
    </location>
    <ligand>
        <name>L-aspartate</name>
        <dbReference type="ChEBI" id="CHEBI:29991"/>
    </ligand>
</feature>
<feature type="binding site" evidence="1">
    <location>
        <position position="277"/>
    </location>
    <ligand>
        <name>carbamoyl phosphate</name>
        <dbReference type="ChEBI" id="CHEBI:58228"/>
    </ligand>
</feature>
<feature type="binding site" evidence="1">
    <location>
        <position position="278"/>
    </location>
    <ligand>
        <name>carbamoyl phosphate</name>
        <dbReference type="ChEBI" id="CHEBI:58228"/>
    </ligand>
</feature>
<reference key="1">
    <citation type="submission" date="2007-11" db="EMBL/GenBank/DDBJ databases">
        <title>Complete sequence of Delftia acidovorans DSM 14801 / SPH-1.</title>
        <authorList>
            <person name="Copeland A."/>
            <person name="Lucas S."/>
            <person name="Lapidus A."/>
            <person name="Barry K."/>
            <person name="Glavina del Rio T."/>
            <person name="Dalin E."/>
            <person name="Tice H."/>
            <person name="Pitluck S."/>
            <person name="Lowry S."/>
            <person name="Clum A."/>
            <person name="Schmutz J."/>
            <person name="Larimer F."/>
            <person name="Land M."/>
            <person name="Hauser L."/>
            <person name="Kyrpides N."/>
            <person name="Kim E."/>
            <person name="Schleheck D."/>
            <person name="Richardson P."/>
        </authorList>
    </citation>
    <scope>NUCLEOTIDE SEQUENCE [LARGE SCALE GENOMIC DNA]</scope>
    <source>
        <strain>DSM 14801 / SPH-1</strain>
    </source>
</reference>
<sequence>MLYKRNPQLNKNGELIHLLSTEGLSKDILTHILDTAANFVSVNDREVKKVPLLRGKSVFNLFFENSTRTRTTFEIAAKRLSADVFNLDIARSSASKGESLLDTIANLSAMAADIFVVRHSESGAPYLIAQHVAPHVHVVNAGDGRHAHPTQGLLDMYTIRHYKKDFANLRVAIVGDVLHSRVARSDIHALTTLGAAEVRVVGPRTLVPPDLAQMGVRVFHTLEEGIRDCDVIIMLRLQNERMSGALLPSSQEYFKSFGLTAEKLRLAKPDAIVMHPGPINRGVEIDSEVVDGPQAVILSQVSFGIAVRMAVMSIVAGNEA</sequence>
<comment type="function">
    <text evidence="1">Catalyzes the condensation of carbamoyl phosphate and aspartate to form carbamoyl aspartate and inorganic phosphate, the committed step in the de novo pyrimidine nucleotide biosynthesis pathway.</text>
</comment>
<comment type="catalytic activity">
    <reaction evidence="1">
        <text>carbamoyl phosphate + L-aspartate = N-carbamoyl-L-aspartate + phosphate + H(+)</text>
        <dbReference type="Rhea" id="RHEA:20013"/>
        <dbReference type="ChEBI" id="CHEBI:15378"/>
        <dbReference type="ChEBI" id="CHEBI:29991"/>
        <dbReference type="ChEBI" id="CHEBI:32814"/>
        <dbReference type="ChEBI" id="CHEBI:43474"/>
        <dbReference type="ChEBI" id="CHEBI:58228"/>
        <dbReference type="EC" id="2.1.3.2"/>
    </reaction>
</comment>
<comment type="pathway">
    <text evidence="1">Pyrimidine metabolism; UMP biosynthesis via de novo pathway; (S)-dihydroorotate from bicarbonate: step 2/3.</text>
</comment>
<comment type="subunit">
    <text evidence="1">Heterododecamer (2C3:3R2) of six catalytic PyrB chains organized as two trimers (C3), and six regulatory PyrI chains organized as three dimers (R2).</text>
</comment>
<comment type="similarity">
    <text evidence="1">Belongs to the aspartate/ornithine carbamoyltransferase superfamily. ATCase family.</text>
</comment>
<evidence type="ECO:0000255" key="1">
    <source>
        <dbReference type="HAMAP-Rule" id="MF_00001"/>
    </source>
</evidence>
<accession>A9BY86</accession>